<evidence type="ECO:0000255" key="1">
    <source>
        <dbReference type="HAMAP-Rule" id="MF_00385"/>
    </source>
</evidence>
<evidence type="ECO:0000305" key="2"/>
<protein>
    <recommendedName>
        <fullName evidence="1">Small ribosomal subunit protein bS16</fullName>
    </recommendedName>
    <alternativeName>
        <fullName evidence="2">30S ribosomal protein S16</fullName>
    </alternativeName>
</protein>
<comment type="similarity">
    <text evidence="1">Belongs to the bacterial ribosomal protein bS16 family.</text>
</comment>
<dbReference type="EMBL" id="CP000932">
    <property type="protein sequence ID" value="ACM64319.1"/>
    <property type="molecule type" value="Genomic_DNA"/>
</dbReference>
<dbReference type="RefSeq" id="WP_012661702.1">
    <property type="nucleotide sequence ID" value="NC_012039.1"/>
</dbReference>
<dbReference type="SMR" id="B9KCN0"/>
<dbReference type="STRING" id="306263.Cla_0996"/>
<dbReference type="GeneID" id="93005035"/>
<dbReference type="KEGG" id="cla:CLA_0996"/>
<dbReference type="eggNOG" id="COG0228">
    <property type="taxonomic scope" value="Bacteria"/>
</dbReference>
<dbReference type="HOGENOM" id="CLU_100590_5_1_7"/>
<dbReference type="Proteomes" id="UP000007727">
    <property type="component" value="Chromosome"/>
</dbReference>
<dbReference type="GO" id="GO:0005737">
    <property type="term" value="C:cytoplasm"/>
    <property type="evidence" value="ECO:0007669"/>
    <property type="project" value="UniProtKB-ARBA"/>
</dbReference>
<dbReference type="GO" id="GO:0015935">
    <property type="term" value="C:small ribosomal subunit"/>
    <property type="evidence" value="ECO:0007669"/>
    <property type="project" value="TreeGrafter"/>
</dbReference>
<dbReference type="GO" id="GO:0003735">
    <property type="term" value="F:structural constituent of ribosome"/>
    <property type="evidence" value="ECO:0007669"/>
    <property type="project" value="InterPro"/>
</dbReference>
<dbReference type="GO" id="GO:0006412">
    <property type="term" value="P:translation"/>
    <property type="evidence" value="ECO:0007669"/>
    <property type="project" value="UniProtKB-UniRule"/>
</dbReference>
<dbReference type="Gene3D" id="3.30.1320.10">
    <property type="match status" value="1"/>
</dbReference>
<dbReference type="HAMAP" id="MF_00385">
    <property type="entry name" value="Ribosomal_bS16"/>
    <property type="match status" value="1"/>
</dbReference>
<dbReference type="InterPro" id="IPR000307">
    <property type="entry name" value="Ribosomal_bS16"/>
</dbReference>
<dbReference type="InterPro" id="IPR023803">
    <property type="entry name" value="Ribosomal_bS16_dom_sf"/>
</dbReference>
<dbReference type="NCBIfam" id="TIGR00002">
    <property type="entry name" value="S16"/>
    <property type="match status" value="1"/>
</dbReference>
<dbReference type="PANTHER" id="PTHR12919">
    <property type="entry name" value="30S RIBOSOMAL PROTEIN S16"/>
    <property type="match status" value="1"/>
</dbReference>
<dbReference type="PANTHER" id="PTHR12919:SF20">
    <property type="entry name" value="SMALL RIBOSOMAL SUBUNIT PROTEIN BS16M"/>
    <property type="match status" value="1"/>
</dbReference>
<dbReference type="Pfam" id="PF00886">
    <property type="entry name" value="Ribosomal_S16"/>
    <property type="match status" value="1"/>
</dbReference>
<dbReference type="SUPFAM" id="SSF54565">
    <property type="entry name" value="Ribosomal protein S16"/>
    <property type="match status" value="1"/>
</dbReference>
<accession>B9KCN0</accession>
<reference key="1">
    <citation type="journal article" date="2008" name="Foodborne Pathog. Dis.">
        <title>The complete genome sequence and analysis of the human pathogen Campylobacter lari.</title>
        <authorList>
            <person name="Miller W.G."/>
            <person name="Wang G."/>
            <person name="Binnewies T.T."/>
            <person name="Parker C.T."/>
        </authorList>
    </citation>
    <scope>NUCLEOTIDE SEQUENCE [LARGE SCALE GENOMIC DNA]</scope>
    <source>
        <strain>RM2100 / D67 / ATCC BAA-1060</strain>
    </source>
</reference>
<name>RS16_CAMLR</name>
<sequence length="75" mass="8753">MTVIRLTKMGRKKRPFYRIVVTDSRKRRDGSWIESIGYYNPMVEPEVVKFDAERLAYWKSVGAKLSDRVAAITSK</sequence>
<keyword id="KW-1185">Reference proteome</keyword>
<keyword id="KW-0687">Ribonucleoprotein</keyword>
<keyword id="KW-0689">Ribosomal protein</keyword>
<organism>
    <name type="scientific">Campylobacter lari (strain RM2100 / D67 / ATCC BAA-1060)</name>
    <dbReference type="NCBI Taxonomy" id="306263"/>
    <lineage>
        <taxon>Bacteria</taxon>
        <taxon>Pseudomonadati</taxon>
        <taxon>Campylobacterota</taxon>
        <taxon>Epsilonproteobacteria</taxon>
        <taxon>Campylobacterales</taxon>
        <taxon>Campylobacteraceae</taxon>
        <taxon>Campylobacter</taxon>
    </lineage>
</organism>
<gene>
    <name evidence="1" type="primary">rpsP</name>
    <name type="ordered locus">Cla_0996</name>
</gene>
<proteinExistence type="inferred from homology"/>
<feature type="chain" id="PRO_1000196358" description="Small ribosomal subunit protein bS16">
    <location>
        <begin position="1"/>
        <end position="75"/>
    </location>
</feature>